<accession>P44197</accession>
<gene>
    <name type="primary">truC</name>
    <name type="ordered locus">HI_1435</name>
</gene>
<evidence type="ECO:0000250" key="1"/>
<evidence type="ECO:0000305" key="2"/>
<dbReference type="EC" id="5.4.99.26"/>
<dbReference type="EMBL" id="L42023">
    <property type="protein sequence ID" value="AAC23084.2"/>
    <property type="status" value="ALT_FRAME"/>
    <property type="molecule type" value="Genomic_DNA"/>
</dbReference>
<dbReference type="PIR" id="I64029">
    <property type="entry name" value="I64029"/>
</dbReference>
<dbReference type="STRING" id="71421.HI_1435"/>
<dbReference type="EnsemblBacteria" id="AAC23084">
    <property type="protein sequence ID" value="AAC23084"/>
    <property type="gene ID" value="HI_1435"/>
</dbReference>
<dbReference type="KEGG" id="hin:HI_1435"/>
<dbReference type="eggNOG" id="COG0564">
    <property type="taxonomic scope" value="Bacteria"/>
</dbReference>
<dbReference type="HOGENOM" id="CLU_016902_11_4_6"/>
<dbReference type="PhylomeDB" id="P44197"/>
<dbReference type="Proteomes" id="UP000000579">
    <property type="component" value="Chromosome"/>
</dbReference>
<dbReference type="GO" id="GO:0009982">
    <property type="term" value="F:pseudouridine synthase activity"/>
    <property type="evidence" value="ECO:0000318"/>
    <property type="project" value="GO_Central"/>
</dbReference>
<dbReference type="GO" id="GO:0003723">
    <property type="term" value="F:RNA binding"/>
    <property type="evidence" value="ECO:0007669"/>
    <property type="project" value="InterPro"/>
</dbReference>
<dbReference type="GO" id="GO:0160149">
    <property type="term" value="F:tRNA pseudouridine(65) synthase activity"/>
    <property type="evidence" value="ECO:0007669"/>
    <property type="project" value="UniProtKB-EC"/>
</dbReference>
<dbReference type="GO" id="GO:0000455">
    <property type="term" value="P:enzyme-directed rRNA pseudouridine synthesis"/>
    <property type="evidence" value="ECO:0000318"/>
    <property type="project" value="GO_Central"/>
</dbReference>
<dbReference type="GO" id="GO:0008033">
    <property type="term" value="P:tRNA processing"/>
    <property type="evidence" value="ECO:0007669"/>
    <property type="project" value="UniProtKB-KW"/>
</dbReference>
<dbReference type="FunFam" id="3.30.2350.10:FF:000008">
    <property type="entry name" value="tRNA pseudouridine synthase C"/>
    <property type="match status" value="1"/>
</dbReference>
<dbReference type="Gene3D" id="3.30.2350.10">
    <property type="entry name" value="Pseudouridine synthase"/>
    <property type="match status" value="1"/>
</dbReference>
<dbReference type="InterPro" id="IPR020103">
    <property type="entry name" value="PsdUridine_synth_cat_dom_sf"/>
</dbReference>
<dbReference type="InterPro" id="IPR006224">
    <property type="entry name" value="PsdUridine_synth_RluA-like_CS"/>
</dbReference>
<dbReference type="InterPro" id="IPR006145">
    <property type="entry name" value="PsdUridine_synth_RsuA/RluA"/>
</dbReference>
<dbReference type="InterPro" id="IPR050188">
    <property type="entry name" value="RluA_PseudoU_synthase"/>
</dbReference>
<dbReference type="NCBIfam" id="NF008321">
    <property type="entry name" value="PRK11112.1"/>
    <property type="match status" value="1"/>
</dbReference>
<dbReference type="PANTHER" id="PTHR21600">
    <property type="entry name" value="MITOCHONDRIAL RNA PSEUDOURIDINE SYNTHASE"/>
    <property type="match status" value="1"/>
</dbReference>
<dbReference type="PANTHER" id="PTHR21600:SF56">
    <property type="entry name" value="TRNA PSEUDOURIDINE SYNTHASE C"/>
    <property type="match status" value="1"/>
</dbReference>
<dbReference type="Pfam" id="PF00849">
    <property type="entry name" value="PseudoU_synth_2"/>
    <property type="match status" value="1"/>
</dbReference>
<dbReference type="SUPFAM" id="SSF55120">
    <property type="entry name" value="Pseudouridine synthase"/>
    <property type="match status" value="1"/>
</dbReference>
<dbReference type="PROSITE" id="PS01129">
    <property type="entry name" value="PSI_RLU"/>
    <property type="match status" value="1"/>
</dbReference>
<organism>
    <name type="scientific">Haemophilus influenzae (strain ATCC 51907 / DSM 11121 / KW20 / Rd)</name>
    <dbReference type="NCBI Taxonomy" id="71421"/>
    <lineage>
        <taxon>Bacteria</taxon>
        <taxon>Pseudomonadati</taxon>
        <taxon>Pseudomonadota</taxon>
        <taxon>Gammaproteobacteria</taxon>
        <taxon>Pasteurellales</taxon>
        <taxon>Pasteurellaceae</taxon>
        <taxon>Haemophilus</taxon>
    </lineage>
</organism>
<name>TRUC_HAEIN</name>
<proteinExistence type="inferred from homology"/>
<feature type="chain" id="PRO_0000162715" description="tRNA pseudouridine synthase C">
    <location>
        <begin position="1"/>
        <end position="239"/>
    </location>
</feature>
<feature type="active site" evidence="1">
    <location>
        <position position="54"/>
    </location>
</feature>
<comment type="function">
    <text evidence="1">Responsible for synthesis of pseudouridine from uracil-65 in transfer RNAs.</text>
</comment>
<comment type="catalytic activity">
    <reaction>
        <text>uridine(65) in tRNA = pseudouridine(65) in tRNA</text>
        <dbReference type="Rhea" id="RHEA:42536"/>
        <dbReference type="Rhea" id="RHEA-COMP:10103"/>
        <dbReference type="Rhea" id="RHEA-COMP:10104"/>
        <dbReference type="ChEBI" id="CHEBI:65314"/>
        <dbReference type="ChEBI" id="CHEBI:65315"/>
        <dbReference type="EC" id="5.4.99.26"/>
    </reaction>
</comment>
<comment type="similarity">
    <text evidence="2">Belongs to the pseudouridine synthase RluA family.</text>
</comment>
<comment type="sequence caution" evidence="2">
    <conflict type="frameshift">
        <sequence resource="EMBL-CDS" id="AAC23084"/>
    </conflict>
</comment>
<protein>
    <recommendedName>
        <fullName>tRNA pseudouridine synthase C</fullName>
        <ecNumber>5.4.99.26</ecNumber>
    </recommendedName>
    <alternativeName>
        <fullName>tRNA pseudouridine(65) synthase</fullName>
    </alternativeName>
    <alternativeName>
        <fullName>tRNA pseudouridylate synthase C</fullName>
    </alternativeName>
    <alternativeName>
        <fullName>tRNA-uridine isomerase C</fullName>
    </alternativeName>
</protein>
<keyword id="KW-0413">Isomerase</keyword>
<keyword id="KW-1185">Reference proteome</keyword>
<keyword id="KW-0819">tRNA processing</keyword>
<sequence length="239" mass="27777">MLEILYQDGFLVAVNKPAGMLVHRSWLDPHETQFVMQTLRDQIGQHVFPIHRLDRPTSGVLLFALSSEIANLMCEQFEQKYVQKSYLAVVRGYLQGKERIDYPLKIQLDKIADKFSQEDKEPQEAITDYEGLKIVEMPYPAGRYQTARYSLVKLIPHTGRKHXLRXHMKHVFHPIXGDTQYGDLHQNRALMSHLGCSRLFLHSDSLSFIHPITKEQITITAGLDEQWQQLMNQFGWENV</sequence>
<reference key="1">
    <citation type="journal article" date="1995" name="Science">
        <title>Whole-genome random sequencing and assembly of Haemophilus influenzae Rd.</title>
        <authorList>
            <person name="Fleischmann R.D."/>
            <person name="Adams M.D."/>
            <person name="White O."/>
            <person name="Clayton R.A."/>
            <person name="Kirkness E.F."/>
            <person name="Kerlavage A.R."/>
            <person name="Bult C.J."/>
            <person name="Tomb J.-F."/>
            <person name="Dougherty B.A."/>
            <person name="Merrick J.M."/>
            <person name="McKenney K."/>
            <person name="Sutton G.G."/>
            <person name="FitzHugh W."/>
            <person name="Fields C.A."/>
            <person name="Gocayne J.D."/>
            <person name="Scott J.D."/>
            <person name="Shirley R."/>
            <person name="Liu L.-I."/>
            <person name="Glodek A."/>
            <person name="Kelley J.M."/>
            <person name="Weidman J.F."/>
            <person name="Phillips C.A."/>
            <person name="Spriggs T."/>
            <person name="Hedblom E."/>
            <person name="Cotton M.D."/>
            <person name="Utterback T.R."/>
            <person name="Hanna M.C."/>
            <person name="Nguyen D.T."/>
            <person name="Saudek D.M."/>
            <person name="Brandon R.C."/>
            <person name="Fine L.D."/>
            <person name="Fritchman J.L."/>
            <person name="Fuhrmann J.L."/>
            <person name="Geoghagen N.S.M."/>
            <person name="Gnehm C.L."/>
            <person name="McDonald L.A."/>
            <person name="Small K.V."/>
            <person name="Fraser C.M."/>
            <person name="Smith H.O."/>
            <person name="Venter J.C."/>
        </authorList>
    </citation>
    <scope>NUCLEOTIDE SEQUENCE [LARGE SCALE GENOMIC DNA]</scope>
    <source>
        <strain>ATCC 51907 / DSM 11121 / KW20 / Rd</strain>
    </source>
</reference>